<dbReference type="EMBL" id="AL111168">
    <property type="protein sequence ID" value="CAL34725.1"/>
    <property type="molecule type" value="Genomic_DNA"/>
</dbReference>
<dbReference type="PIR" id="B81405">
    <property type="entry name" value="B81405"/>
</dbReference>
<dbReference type="RefSeq" id="WP_002852097.1">
    <property type="nucleotide sequence ID" value="NZ_SZUC01000002.1"/>
</dbReference>
<dbReference type="RefSeq" id="YP_002344009.1">
    <property type="nucleotide sequence ID" value="NC_002163.1"/>
</dbReference>
<dbReference type="SMR" id="Q9PHT7"/>
<dbReference type="IntAct" id="Q9PHT7">
    <property type="interactions" value="33"/>
</dbReference>
<dbReference type="STRING" id="192222.Cj0579c"/>
<dbReference type="PaxDb" id="192222-Cj0579c"/>
<dbReference type="EnsemblBacteria" id="CAL34725">
    <property type="protein sequence ID" value="CAL34725"/>
    <property type="gene ID" value="Cj0579c"/>
</dbReference>
<dbReference type="GeneID" id="904904"/>
<dbReference type="KEGG" id="cje:Cj0579c"/>
<dbReference type="PATRIC" id="fig|192222.6.peg.571"/>
<dbReference type="eggNOG" id="COG1826">
    <property type="taxonomic scope" value="Bacteria"/>
</dbReference>
<dbReference type="HOGENOM" id="CLU_086034_0_3_7"/>
<dbReference type="OrthoDB" id="5373084at2"/>
<dbReference type="Proteomes" id="UP000000799">
    <property type="component" value="Chromosome"/>
</dbReference>
<dbReference type="GO" id="GO:0033281">
    <property type="term" value="C:TAT protein transport complex"/>
    <property type="evidence" value="ECO:0007669"/>
    <property type="project" value="UniProtKB-UniRule"/>
</dbReference>
<dbReference type="GO" id="GO:0008320">
    <property type="term" value="F:protein transmembrane transporter activity"/>
    <property type="evidence" value="ECO:0007669"/>
    <property type="project" value="UniProtKB-UniRule"/>
</dbReference>
<dbReference type="GO" id="GO:0043953">
    <property type="term" value="P:protein transport by the Tat complex"/>
    <property type="evidence" value="ECO:0007669"/>
    <property type="project" value="UniProtKB-UniRule"/>
</dbReference>
<dbReference type="Gene3D" id="1.20.5.3310">
    <property type="match status" value="1"/>
</dbReference>
<dbReference type="HAMAP" id="MF_00237">
    <property type="entry name" value="TatB"/>
    <property type="match status" value="1"/>
</dbReference>
<dbReference type="InterPro" id="IPR003369">
    <property type="entry name" value="TatA/B/E"/>
</dbReference>
<dbReference type="InterPro" id="IPR018448">
    <property type="entry name" value="TatB"/>
</dbReference>
<dbReference type="NCBIfam" id="TIGR01410">
    <property type="entry name" value="tatB"/>
    <property type="match status" value="1"/>
</dbReference>
<dbReference type="PANTHER" id="PTHR33162">
    <property type="entry name" value="SEC-INDEPENDENT PROTEIN TRANSLOCASE PROTEIN TATA, CHLOROPLASTIC"/>
    <property type="match status" value="1"/>
</dbReference>
<dbReference type="PANTHER" id="PTHR33162:SF1">
    <property type="entry name" value="SEC-INDEPENDENT PROTEIN TRANSLOCASE PROTEIN TATA, CHLOROPLASTIC"/>
    <property type="match status" value="1"/>
</dbReference>
<dbReference type="Pfam" id="PF02416">
    <property type="entry name" value="TatA_B_E"/>
    <property type="match status" value="1"/>
</dbReference>
<feature type="chain" id="PRO_0000192649" description="Sec-independent protein translocase protein TatB">
    <location>
        <begin position="1"/>
        <end position="138"/>
    </location>
</feature>
<feature type="transmembrane region" description="Helical" evidence="1">
    <location>
        <begin position="2"/>
        <end position="18"/>
    </location>
</feature>
<feature type="region of interest" description="Disordered" evidence="2">
    <location>
        <begin position="109"/>
        <end position="138"/>
    </location>
</feature>
<feature type="compositionally biased region" description="Basic and acidic residues" evidence="2">
    <location>
        <begin position="118"/>
        <end position="138"/>
    </location>
</feature>
<name>TATB_CAMJE</name>
<protein>
    <recommendedName>
        <fullName evidence="1">Sec-independent protein translocase protein TatB</fullName>
    </recommendedName>
</protein>
<organism>
    <name type="scientific">Campylobacter jejuni subsp. jejuni serotype O:2 (strain ATCC 700819 / NCTC 11168)</name>
    <dbReference type="NCBI Taxonomy" id="192222"/>
    <lineage>
        <taxon>Bacteria</taxon>
        <taxon>Pseudomonadati</taxon>
        <taxon>Campylobacterota</taxon>
        <taxon>Epsilonproteobacteria</taxon>
        <taxon>Campylobacterales</taxon>
        <taxon>Campylobacteraceae</taxon>
        <taxon>Campylobacter</taxon>
    </lineage>
</organism>
<gene>
    <name evidence="1" type="primary">tatB</name>
    <name type="ordered locus">Cj0579c</name>
</gene>
<keyword id="KW-0997">Cell inner membrane</keyword>
<keyword id="KW-1003">Cell membrane</keyword>
<keyword id="KW-0472">Membrane</keyword>
<keyword id="KW-0653">Protein transport</keyword>
<keyword id="KW-1185">Reference proteome</keyword>
<keyword id="KW-0811">Translocation</keyword>
<keyword id="KW-0812">Transmembrane</keyword>
<keyword id="KW-1133">Transmembrane helix</keyword>
<keyword id="KW-0813">Transport</keyword>
<comment type="function">
    <text evidence="1">Part of the twin-arginine translocation (Tat) system that transports large folded proteins containing a characteristic twin-arginine motif in their signal peptide across membranes. Together with TatC, TatB is part of a receptor directly interacting with Tat signal peptides. TatB may form an oligomeric binding site that transiently accommodates folded Tat precursor proteins before their translocation.</text>
</comment>
<comment type="subunit">
    <text evidence="1">The Tat system comprises two distinct complexes: a TatABC complex, containing multiple copies of TatA, TatB and TatC subunits, and a separate TatA complex, containing only TatA subunits. Substrates initially bind to the TatABC complex, which probably triggers association of the separate TatA complex to form the active translocon.</text>
</comment>
<comment type="subcellular location">
    <subcellularLocation>
        <location evidence="1">Cell inner membrane</location>
        <topology evidence="1">Single-pass membrane protein</topology>
    </subcellularLocation>
</comment>
<comment type="similarity">
    <text evidence="1">Belongs to the TatB family.</text>
</comment>
<reference key="1">
    <citation type="journal article" date="2000" name="Nature">
        <title>The genome sequence of the food-borne pathogen Campylobacter jejuni reveals hypervariable sequences.</title>
        <authorList>
            <person name="Parkhill J."/>
            <person name="Wren B.W."/>
            <person name="Mungall K.L."/>
            <person name="Ketley J.M."/>
            <person name="Churcher C.M."/>
            <person name="Basham D."/>
            <person name="Chillingworth T."/>
            <person name="Davies R.M."/>
            <person name="Feltwell T."/>
            <person name="Holroyd S."/>
            <person name="Jagels K."/>
            <person name="Karlyshev A.V."/>
            <person name="Moule S."/>
            <person name="Pallen M.J."/>
            <person name="Penn C.W."/>
            <person name="Quail M.A."/>
            <person name="Rajandream M.A."/>
            <person name="Rutherford K.M."/>
            <person name="van Vliet A.H.M."/>
            <person name="Whitehead S."/>
            <person name="Barrell B.G."/>
        </authorList>
    </citation>
    <scope>NUCLEOTIDE SEQUENCE [LARGE SCALE GENOMIC DNA]</scope>
    <source>
        <strain>ATCC 700819 / NCTC 11168</strain>
    </source>
</reference>
<evidence type="ECO:0000255" key="1">
    <source>
        <dbReference type="HAMAP-Rule" id="MF_00237"/>
    </source>
</evidence>
<evidence type="ECO:0000256" key="2">
    <source>
        <dbReference type="SAM" id="MobiDB-lite"/>
    </source>
</evidence>
<accession>Q9PHT7</accession>
<accession>Q0PAT8</accession>
<proteinExistence type="inferred from homology"/>
<sequence>MSFGEIIVILVVAILVLGPDKLPEAIVQIAKILKAVKRNIDDAKSSIEKEIRINDLKEEAKKYKDEFSSTNENIRKKLSFEEFDDLKRDILDKTKVDLTFDSRDDKVKNNLSGQNLNTEEKPNLSKLETQDKNGKINV</sequence>